<accession>Q8C3B8</accession>
<accession>B2RUN9</accession>
<feature type="chain" id="PRO_0000311287" description="Man(5)GlcNAc(2)-PP-dolichol translocation protein RFT1">
    <location>
        <begin position="1"/>
        <end position="541"/>
    </location>
</feature>
<feature type="transmembrane region" description="Helical" evidence="3">
    <location>
        <begin position="16"/>
        <end position="36"/>
    </location>
</feature>
<feature type="transmembrane region" description="Helical" evidence="3">
    <location>
        <begin position="45"/>
        <end position="62"/>
    </location>
</feature>
<feature type="transmembrane region" description="Helical" evidence="3">
    <location>
        <begin position="85"/>
        <end position="105"/>
    </location>
</feature>
<feature type="transmembrane region" description="Helical" evidence="3">
    <location>
        <begin position="123"/>
        <end position="143"/>
    </location>
</feature>
<feature type="transmembrane region" description="Helical" evidence="3">
    <location>
        <begin position="154"/>
        <end position="176"/>
    </location>
</feature>
<feature type="transmembrane region" description="Helical" evidence="3">
    <location>
        <begin position="187"/>
        <end position="207"/>
    </location>
</feature>
<feature type="transmembrane region" description="Helical" evidence="3">
    <location>
        <begin position="335"/>
        <end position="355"/>
    </location>
</feature>
<feature type="transmembrane region" description="Helical" evidence="3">
    <location>
        <begin position="376"/>
        <end position="396"/>
    </location>
</feature>
<feature type="transmembrane region" description="Helical" evidence="3">
    <location>
        <begin position="414"/>
        <end position="434"/>
    </location>
</feature>
<feature type="transmembrane region" description="Helical" evidence="3">
    <location>
        <begin position="470"/>
        <end position="490"/>
    </location>
</feature>
<feature type="transmembrane region" description="Helical" evidence="3">
    <location>
        <begin position="499"/>
        <end position="519"/>
    </location>
</feature>
<feature type="splice variant" id="VSP_029509" description="In isoform 2." evidence="4 5">
    <original>LLYTTVLVLCYAIYLIQLLRSPESAKQLTLPVSR</original>
    <variation>VRVVALLFTRLSSLLVPTSMCLCSQYSCCGIVGN</variation>
    <location>
        <begin position="187"/>
        <end position="220"/>
    </location>
</feature>
<feature type="splice variant" id="VSP_029510" description="In isoform 2." evidence="4 5">
    <location>
        <begin position="221"/>
        <end position="541"/>
    </location>
</feature>
<dbReference type="EMBL" id="AK086390">
    <property type="protein sequence ID" value="BAC39658.1"/>
    <property type="molecule type" value="mRNA"/>
</dbReference>
<dbReference type="EMBL" id="AC154436">
    <property type="status" value="NOT_ANNOTATED_CDS"/>
    <property type="molecule type" value="Genomic_DNA"/>
</dbReference>
<dbReference type="EMBL" id="AC154646">
    <property type="status" value="NOT_ANNOTATED_CDS"/>
    <property type="molecule type" value="Genomic_DNA"/>
</dbReference>
<dbReference type="EMBL" id="BC116368">
    <property type="protein sequence ID" value="AAI16369.1"/>
    <property type="molecule type" value="mRNA"/>
</dbReference>
<dbReference type="EMBL" id="BC116369">
    <property type="protein sequence ID" value="AAI16370.1"/>
    <property type="molecule type" value="mRNA"/>
</dbReference>
<dbReference type="EMBL" id="BC141275">
    <property type="protein sequence ID" value="AAI41276.1"/>
    <property type="molecule type" value="mRNA"/>
</dbReference>
<dbReference type="CCDS" id="CCDS26896.1">
    <molecule id="Q8C3B8-1"/>
</dbReference>
<dbReference type="RefSeq" id="NP_808483.2">
    <molecule id="Q8C3B8-1"/>
    <property type="nucleotide sequence ID" value="NM_177815.4"/>
</dbReference>
<dbReference type="SMR" id="Q8C3B8"/>
<dbReference type="BioGRID" id="236591">
    <property type="interactions" value="3"/>
</dbReference>
<dbReference type="FunCoup" id="Q8C3B8">
    <property type="interactions" value="2195"/>
</dbReference>
<dbReference type="STRING" id="10090.ENSMUSP00000064153"/>
<dbReference type="iPTMnet" id="Q8C3B8"/>
<dbReference type="PhosphoSitePlus" id="Q8C3B8"/>
<dbReference type="jPOST" id="Q8C3B8"/>
<dbReference type="PaxDb" id="10090-ENSMUSP00000064153"/>
<dbReference type="ProteomicsDB" id="255011">
    <molecule id="Q8C3B8-1"/>
</dbReference>
<dbReference type="ProteomicsDB" id="255012">
    <molecule id="Q8C3B8-2"/>
</dbReference>
<dbReference type="Ensembl" id="ENSMUST00000064230.16">
    <molecule id="Q8C3B8-1"/>
    <property type="protein sequence ID" value="ENSMUSP00000064153.8"/>
    <property type="gene ID" value="ENSMUSG00000052395.18"/>
</dbReference>
<dbReference type="GeneID" id="328370"/>
<dbReference type="KEGG" id="mmu:328370"/>
<dbReference type="UCSC" id="uc007svm.1">
    <molecule id="Q8C3B8-2"/>
    <property type="organism name" value="mouse"/>
</dbReference>
<dbReference type="UCSC" id="uc007svn.1">
    <molecule id="Q8C3B8-1"/>
    <property type="organism name" value="mouse"/>
</dbReference>
<dbReference type="AGR" id="MGI:3607791"/>
<dbReference type="CTD" id="91869"/>
<dbReference type="MGI" id="MGI:3607791">
    <property type="gene designation" value="Rft1"/>
</dbReference>
<dbReference type="VEuPathDB" id="HostDB:ENSMUSG00000052395"/>
<dbReference type="eggNOG" id="KOG2864">
    <property type="taxonomic scope" value="Eukaryota"/>
</dbReference>
<dbReference type="GeneTree" id="ENSGT00390000011390"/>
<dbReference type="HOGENOM" id="CLU_023360_5_0_1"/>
<dbReference type="InParanoid" id="Q8C3B8"/>
<dbReference type="OMA" id="WPGKLFG"/>
<dbReference type="OrthoDB" id="9979195at2759"/>
<dbReference type="PhylomeDB" id="Q8C3B8"/>
<dbReference type="TreeFam" id="TF313129"/>
<dbReference type="UniPathway" id="UPA00378"/>
<dbReference type="BioGRID-ORCS" id="328370">
    <property type="hits" value="22 hits in 75 CRISPR screens"/>
</dbReference>
<dbReference type="ChiTaRS" id="Rft1">
    <property type="organism name" value="mouse"/>
</dbReference>
<dbReference type="PRO" id="PR:Q8C3B8"/>
<dbReference type="Proteomes" id="UP000000589">
    <property type="component" value="Chromosome 14"/>
</dbReference>
<dbReference type="RNAct" id="Q8C3B8">
    <property type="molecule type" value="protein"/>
</dbReference>
<dbReference type="Bgee" id="ENSMUSG00000052395">
    <property type="expression patterns" value="Expressed in proximal tubule and 66 other cell types or tissues"/>
</dbReference>
<dbReference type="ExpressionAtlas" id="Q8C3B8">
    <property type="expression patterns" value="baseline and differential"/>
</dbReference>
<dbReference type="GO" id="GO:0005789">
    <property type="term" value="C:endoplasmic reticulum membrane"/>
    <property type="evidence" value="ECO:0007669"/>
    <property type="project" value="UniProtKB-SubCell"/>
</dbReference>
<dbReference type="GO" id="GO:0006488">
    <property type="term" value="P:dolichol-linked oligosaccharide biosynthetic process"/>
    <property type="evidence" value="ECO:0000250"/>
    <property type="project" value="UniProtKB"/>
</dbReference>
<dbReference type="GO" id="GO:0034203">
    <property type="term" value="P:glycolipid translocation"/>
    <property type="evidence" value="ECO:0000250"/>
    <property type="project" value="UniProtKB"/>
</dbReference>
<dbReference type="GO" id="GO:0006487">
    <property type="term" value="P:protein N-linked glycosylation"/>
    <property type="evidence" value="ECO:0000250"/>
    <property type="project" value="UniProtKB"/>
</dbReference>
<dbReference type="InterPro" id="IPR007594">
    <property type="entry name" value="RFT1"/>
</dbReference>
<dbReference type="PANTHER" id="PTHR13117">
    <property type="entry name" value="ENDOPLASMIC RETICULUM MULTISPAN TRANSMEMBRANE PROTEIN-RELATED"/>
    <property type="match status" value="1"/>
</dbReference>
<dbReference type="PANTHER" id="PTHR13117:SF5">
    <property type="entry name" value="PROTEIN RFT1 HOMOLOG"/>
    <property type="match status" value="1"/>
</dbReference>
<dbReference type="Pfam" id="PF04506">
    <property type="entry name" value="Rft-1"/>
    <property type="match status" value="1"/>
</dbReference>
<name>RFT1_MOUSE</name>
<proteinExistence type="evidence at transcript level"/>
<gene>
    <name evidence="7" type="primary">Rft1</name>
</gene>
<keyword id="KW-0025">Alternative splicing</keyword>
<keyword id="KW-0256">Endoplasmic reticulum</keyword>
<keyword id="KW-0472">Membrane</keyword>
<keyword id="KW-1185">Reference proteome</keyword>
<keyword id="KW-0762">Sugar transport</keyword>
<keyword id="KW-0812">Transmembrane</keyword>
<keyword id="KW-1133">Transmembrane helix</keyword>
<keyword id="KW-0813">Transport</keyword>
<reference key="1">
    <citation type="journal article" date="2005" name="Science">
        <title>The transcriptional landscape of the mammalian genome.</title>
        <authorList>
            <person name="Carninci P."/>
            <person name="Kasukawa T."/>
            <person name="Katayama S."/>
            <person name="Gough J."/>
            <person name="Frith M.C."/>
            <person name="Maeda N."/>
            <person name="Oyama R."/>
            <person name="Ravasi T."/>
            <person name="Lenhard B."/>
            <person name="Wells C."/>
            <person name="Kodzius R."/>
            <person name="Shimokawa K."/>
            <person name="Bajic V.B."/>
            <person name="Brenner S.E."/>
            <person name="Batalov S."/>
            <person name="Forrest A.R."/>
            <person name="Zavolan M."/>
            <person name="Davis M.J."/>
            <person name="Wilming L.G."/>
            <person name="Aidinis V."/>
            <person name="Allen J.E."/>
            <person name="Ambesi-Impiombato A."/>
            <person name="Apweiler R."/>
            <person name="Aturaliya R.N."/>
            <person name="Bailey T.L."/>
            <person name="Bansal M."/>
            <person name="Baxter L."/>
            <person name="Beisel K.W."/>
            <person name="Bersano T."/>
            <person name="Bono H."/>
            <person name="Chalk A.M."/>
            <person name="Chiu K.P."/>
            <person name="Choudhary V."/>
            <person name="Christoffels A."/>
            <person name="Clutterbuck D.R."/>
            <person name="Crowe M.L."/>
            <person name="Dalla E."/>
            <person name="Dalrymple B.P."/>
            <person name="de Bono B."/>
            <person name="Della Gatta G."/>
            <person name="di Bernardo D."/>
            <person name="Down T."/>
            <person name="Engstrom P."/>
            <person name="Fagiolini M."/>
            <person name="Faulkner G."/>
            <person name="Fletcher C.F."/>
            <person name="Fukushima T."/>
            <person name="Furuno M."/>
            <person name="Futaki S."/>
            <person name="Gariboldi M."/>
            <person name="Georgii-Hemming P."/>
            <person name="Gingeras T.R."/>
            <person name="Gojobori T."/>
            <person name="Green R.E."/>
            <person name="Gustincich S."/>
            <person name="Harbers M."/>
            <person name="Hayashi Y."/>
            <person name="Hensch T.K."/>
            <person name="Hirokawa N."/>
            <person name="Hill D."/>
            <person name="Huminiecki L."/>
            <person name="Iacono M."/>
            <person name="Ikeo K."/>
            <person name="Iwama A."/>
            <person name="Ishikawa T."/>
            <person name="Jakt M."/>
            <person name="Kanapin A."/>
            <person name="Katoh M."/>
            <person name="Kawasawa Y."/>
            <person name="Kelso J."/>
            <person name="Kitamura H."/>
            <person name="Kitano H."/>
            <person name="Kollias G."/>
            <person name="Krishnan S.P."/>
            <person name="Kruger A."/>
            <person name="Kummerfeld S.K."/>
            <person name="Kurochkin I.V."/>
            <person name="Lareau L.F."/>
            <person name="Lazarevic D."/>
            <person name="Lipovich L."/>
            <person name="Liu J."/>
            <person name="Liuni S."/>
            <person name="McWilliam S."/>
            <person name="Madan Babu M."/>
            <person name="Madera M."/>
            <person name="Marchionni L."/>
            <person name="Matsuda H."/>
            <person name="Matsuzawa S."/>
            <person name="Miki H."/>
            <person name="Mignone F."/>
            <person name="Miyake S."/>
            <person name="Morris K."/>
            <person name="Mottagui-Tabar S."/>
            <person name="Mulder N."/>
            <person name="Nakano N."/>
            <person name="Nakauchi H."/>
            <person name="Ng P."/>
            <person name="Nilsson R."/>
            <person name="Nishiguchi S."/>
            <person name="Nishikawa S."/>
            <person name="Nori F."/>
            <person name="Ohara O."/>
            <person name="Okazaki Y."/>
            <person name="Orlando V."/>
            <person name="Pang K.C."/>
            <person name="Pavan W.J."/>
            <person name="Pavesi G."/>
            <person name="Pesole G."/>
            <person name="Petrovsky N."/>
            <person name="Piazza S."/>
            <person name="Reed J."/>
            <person name="Reid J.F."/>
            <person name="Ring B.Z."/>
            <person name="Ringwald M."/>
            <person name="Rost B."/>
            <person name="Ruan Y."/>
            <person name="Salzberg S.L."/>
            <person name="Sandelin A."/>
            <person name="Schneider C."/>
            <person name="Schoenbach C."/>
            <person name="Sekiguchi K."/>
            <person name="Semple C.A."/>
            <person name="Seno S."/>
            <person name="Sessa L."/>
            <person name="Sheng Y."/>
            <person name="Shibata Y."/>
            <person name="Shimada H."/>
            <person name="Shimada K."/>
            <person name="Silva D."/>
            <person name="Sinclair B."/>
            <person name="Sperling S."/>
            <person name="Stupka E."/>
            <person name="Sugiura K."/>
            <person name="Sultana R."/>
            <person name="Takenaka Y."/>
            <person name="Taki K."/>
            <person name="Tammoja K."/>
            <person name="Tan S.L."/>
            <person name="Tang S."/>
            <person name="Taylor M.S."/>
            <person name="Tegner J."/>
            <person name="Teichmann S.A."/>
            <person name="Ueda H.R."/>
            <person name="van Nimwegen E."/>
            <person name="Verardo R."/>
            <person name="Wei C.L."/>
            <person name="Yagi K."/>
            <person name="Yamanishi H."/>
            <person name="Zabarovsky E."/>
            <person name="Zhu S."/>
            <person name="Zimmer A."/>
            <person name="Hide W."/>
            <person name="Bult C."/>
            <person name="Grimmond S.M."/>
            <person name="Teasdale R.D."/>
            <person name="Liu E.T."/>
            <person name="Brusic V."/>
            <person name="Quackenbush J."/>
            <person name="Wahlestedt C."/>
            <person name="Mattick J.S."/>
            <person name="Hume D.A."/>
            <person name="Kai C."/>
            <person name="Sasaki D."/>
            <person name="Tomaru Y."/>
            <person name="Fukuda S."/>
            <person name="Kanamori-Katayama M."/>
            <person name="Suzuki M."/>
            <person name="Aoki J."/>
            <person name="Arakawa T."/>
            <person name="Iida J."/>
            <person name="Imamura K."/>
            <person name="Itoh M."/>
            <person name="Kato T."/>
            <person name="Kawaji H."/>
            <person name="Kawagashira N."/>
            <person name="Kawashima T."/>
            <person name="Kojima M."/>
            <person name="Kondo S."/>
            <person name="Konno H."/>
            <person name="Nakano K."/>
            <person name="Ninomiya N."/>
            <person name="Nishio T."/>
            <person name="Okada M."/>
            <person name="Plessy C."/>
            <person name="Shibata K."/>
            <person name="Shiraki T."/>
            <person name="Suzuki S."/>
            <person name="Tagami M."/>
            <person name="Waki K."/>
            <person name="Watahiki A."/>
            <person name="Okamura-Oho Y."/>
            <person name="Suzuki H."/>
            <person name="Kawai J."/>
            <person name="Hayashizaki Y."/>
        </authorList>
    </citation>
    <scope>NUCLEOTIDE SEQUENCE [LARGE SCALE MRNA] (ISOFORM 2)</scope>
    <source>
        <strain>C57BL/6J</strain>
        <tissue>Head</tissue>
    </source>
</reference>
<reference key="2">
    <citation type="journal article" date="2009" name="PLoS Biol.">
        <title>Lineage-specific biology revealed by a finished genome assembly of the mouse.</title>
        <authorList>
            <person name="Church D.M."/>
            <person name="Goodstadt L."/>
            <person name="Hillier L.W."/>
            <person name="Zody M.C."/>
            <person name="Goldstein S."/>
            <person name="She X."/>
            <person name="Bult C.J."/>
            <person name="Agarwala R."/>
            <person name="Cherry J.L."/>
            <person name="DiCuccio M."/>
            <person name="Hlavina W."/>
            <person name="Kapustin Y."/>
            <person name="Meric P."/>
            <person name="Maglott D."/>
            <person name="Birtle Z."/>
            <person name="Marques A.C."/>
            <person name="Graves T."/>
            <person name="Zhou S."/>
            <person name="Teague B."/>
            <person name="Potamousis K."/>
            <person name="Churas C."/>
            <person name="Place M."/>
            <person name="Herschleb J."/>
            <person name="Runnheim R."/>
            <person name="Forrest D."/>
            <person name="Amos-Landgraf J."/>
            <person name="Schwartz D.C."/>
            <person name="Cheng Z."/>
            <person name="Lindblad-Toh K."/>
            <person name="Eichler E.E."/>
            <person name="Ponting C.P."/>
        </authorList>
    </citation>
    <scope>NUCLEOTIDE SEQUENCE [LARGE SCALE GENOMIC DNA]</scope>
    <source>
        <strain>C57BL/6J</strain>
    </source>
</reference>
<reference key="3">
    <citation type="journal article" date="2004" name="Genome Res.">
        <title>The status, quality, and expansion of the NIH full-length cDNA project: the Mammalian Gene Collection (MGC).</title>
        <authorList>
            <consortium name="The MGC Project Team"/>
        </authorList>
    </citation>
    <scope>NUCLEOTIDE SEQUENCE [LARGE SCALE MRNA] (ISOFORMS 1 AND 2)</scope>
    <source>
        <tissue>Brain</tissue>
    </source>
</reference>
<organism>
    <name type="scientific">Mus musculus</name>
    <name type="common">Mouse</name>
    <dbReference type="NCBI Taxonomy" id="10090"/>
    <lineage>
        <taxon>Eukaryota</taxon>
        <taxon>Metazoa</taxon>
        <taxon>Chordata</taxon>
        <taxon>Craniata</taxon>
        <taxon>Vertebrata</taxon>
        <taxon>Euteleostomi</taxon>
        <taxon>Mammalia</taxon>
        <taxon>Eutheria</taxon>
        <taxon>Euarchontoglires</taxon>
        <taxon>Glires</taxon>
        <taxon>Rodentia</taxon>
        <taxon>Myomorpha</taxon>
        <taxon>Muroidea</taxon>
        <taxon>Muridae</taxon>
        <taxon>Murinae</taxon>
        <taxon>Mus</taxon>
        <taxon>Mus</taxon>
    </lineage>
</organism>
<evidence type="ECO:0000250" key="1">
    <source>
        <dbReference type="UniProtKB" id="P38206"/>
    </source>
</evidence>
<evidence type="ECO:0000250" key="2">
    <source>
        <dbReference type="UniProtKB" id="Q96AA3"/>
    </source>
</evidence>
<evidence type="ECO:0000255" key="3"/>
<evidence type="ECO:0000303" key="4">
    <source>
    </source>
</evidence>
<evidence type="ECO:0000303" key="5">
    <source>
    </source>
</evidence>
<evidence type="ECO:0000305" key="6"/>
<evidence type="ECO:0000312" key="7">
    <source>
        <dbReference type="MGI" id="MGI:3607791"/>
    </source>
</evidence>
<sequence length="541" mass="60303">MGSQEVLGQAARLASSGLLLQVLFRLITFVLNAFILRFLSKEIVGIVNVRLTLLYSTTTFLAREAFRRACLSGGAQRDWSQTLNLLWLTVPLGIFWSSCLGWVWLQLLEVPDPDVVPYYGTGVLFFGLSAVVELLGEPFWVLAQAHMFVKLKVLAESMSVILRSVLTALLVLWLPHWGLYIFSLAQLLYTTVLVLCYAIYLIQLLRSPESAKQLTLPVSRVTQLLPSISRSRAFVNWKEAGLAWSFFKQSFLKQILTEGERYVMTFLNVLNFGDQGVYDIVNNLGSLVARLIFQPVEESFYLFFAKVLEREKDASLQKQDDVAVAAAVLESLLKLALLTGLTMTVFGFAYSQLALDIYGGAMLSSGSGPVLMRCYCLYVLLLAINGVTECFMFAAMSKEEVDRYNFTMLALSSSFLVLSYLLTSWCGSVGFIMANCFNMGIRITQSLSFIHHYFRESPHRPLAGLRLSPVLLGVFILSAGITSVSEAFLCCERGWPARLAHIAVGTICLGVTLGTAFLTETKLIHFLRTQLGRSRLSDKMT</sequence>
<comment type="function">
    <text evidence="1 2">Intramembrane glycolipid transporter that operates in the biosynthetic pathway of dolichol-linked oligosaccharides, the glycan precursors employed in protein asparagine (N)-glycosylation. The sequential addition of sugars to dolichol pyrophosphate produces dolichol-linked oligosaccharides containing fourteen sugars, including two GlcNAcs, nine mannoses and three glucoses. Once assembled, the oligosaccharide is transferred from the lipid to nascent proteins by oligosaccharyltransferases. The assembly of dolichol-linked oligosaccharides begins on the cytosolic side of the endoplasmic reticulum membrane and finishes in its lumen. RFT1 could mediate the translocation of the cytosolically oriented intermediate DolPP-GlcNAc2Man5, produced by ALG11, into the ER lumen where dolichol-linked oligosaccharides assembly continues (By similarity). However, the intramembrane lipid transporter activity could not be confirmed in vitro (By similarity).</text>
</comment>
<comment type="pathway">
    <text evidence="2">Protein modification; protein glycosylation.</text>
</comment>
<comment type="subcellular location">
    <subcellularLocation>
        <location evidence="1">Endoplasmic reticulum membrane</location>
        <topology evidence="3">Multi-pass membrane protein</topology>
    </subcellularLocation>
</comment>
<comment type="alternative products">
    <event type="alternative splicing"/>
    <isoform>
        <id>Q8C3B8-1</id>
        <name>1</name>
        <sequence type="displayed"/>
    </isoform>
    <isoform>
        <id>Q8C3B8-2</id>
        <name>2</name>
        <sequence type="described" ref="VSP_029509 VSP_029510"/>
    </isoform>
</comment>
<comment type="similarity">
    <text evidence="6">Belongs to the RFT1 family.</text>
</comment>
<protein>
    <recommendedName>
        <fullName evidence="2">Man(5)GlcNAc(2)-PP-dolichol translocation protein RFT1</fullName>
    </recommendedName>
    <alternativeName>
        <fullName evidence="7">Protein RFT1 homolog</fullName>
    </alternativeName>
</protein>